<comment type="function">
    <text evidence="1">Minor protein of the capsid that localizes along the inner surface of the virion, within the central cavities beneath the L1 pentamers. Plays a role in capsid stabilization through interaction with the major capsid protein L1. Once the virion enters the host cell, L2 escorts the genomic DNA into the nucleus by promoting escape from the endosomal compartments and traffic through the host Golgi network. Mechanistically, the C-terminus of L2 possesses a cell-penetrating peptide that protudes from the host endosome, interacts with host cytoplasmic retromer cargo and thereby mediates the capsid delivery to the host trans-Golgi network. Plays a role through its interaction with host dynein in the intracellular microtubule-dependent transport of viral capsid toward the nucleus. Mediates the viral genome import into the nucleus through binding to host importins. Once within the nucleus, L2 localizes viral genomes to host PML bodies in order to activate early gene expression for establishment of infection. Later on, promotes late gene expression by interacting with the viral E2 protein and by inhibiting its transcriptional activation functions. During virion assembly, encapsidates the genome by direct interaction with the viral DNA.</text>
</comment>
<comment type="subunit">
    <text evidence="1">Interacts with major capsid protein L1. Interacts with E2; this interaction inhibits E2 transcriptional activity but not the DNA replication function E2. Interacts with host GADD45GIP1. Interacts with host HSPA8; this interaction is required for L2 nuclear translocation. Interacts with host importins KPNB2 and KPNB3. Forms a complex with importin alpha2-beta1 heterodimers via interaction with the importin alpha2 adapter. Interacts with host DYNLT1; this interaction is essential for virus intracellular transport during entry. Interacts (via C-terminus) with host retromer subunits VPS35 and VPS29.</text>
</comment>
<comment type="subcellular location">
    <subcellularLocation>
        <location evidence="1">Virion</location>
    </subcellularLocation>
    <subcellularLocation>
        <location evidence="1">Host nucleus</location>
    </subcellularLocation>
    <subcellularLocation>
        <location evidence="1">Host early endosome</location>
    </subcellularLocation>
    <subcellularLocation>
        <location evidence="1">Host Golgi apparatus</location>
    </subcellularLocation>
</comment>
<comment type="PTM">
    <text evidence="1">Highly phosphorylated.</text>
</comment>
<comment type="similarity">
    <text evidence="1">Belongs to the papillomaviridae L2 protein family.</text>
</comment>
<evidence type="ECO:0000255" key="1">
    <source>
        <dbReference type="HAMAP-Rule" id="MF_04003"/>
    </source>
</evidence>
<protein>
    <recommendedName>
        <fullName evidence="1">Minor capsid protein L2</fullName>
    </recommendedName>
</protein>
<reference key="1">
    <citation type="journal article" date="1994" name="Curr. Top. Microbiol. Immunol.">
        <title>Primer-directed sequencing of human papillomavirus types.</title>
        <authorList>
            <person name="Delius H."/>
            <person name="Hofmann B."/>
        </authorList>
    </citation>
    <scope>NUCLEOTIDE SEQUENCE [GENOMIC DNA]</scope>
</reference>
<sequence length="456" mass="48994">MVSSRPRRRKRASATQLYQTCKAAGTCPPDVVNKVEQTTVADQILKWGSMGVFFGGLGIGSGSGSGGRAGYVPLSTGSRAIPPKSLAPDVIARPPVVVDTVAPTDPSIVSLIEESSIIQSGAPSPVIPTEGGFSITSSGTDVPAILDISSTNTVHVTSTTHHNPIFTDPSVVQPIPPVEASGRIIVSHSSITTGAAEEIPMDTFVVHSDPLSSTPVPGVSARPKVGLYSKALQQVEIVDPTFMSTPQRLITYDNPVFDNIEDTLHFEQPSIHNAPDPAFMDIITLHRPALTSRRGVVRFSRVGQRGTMYTRRGTRIGGRVHFFKDISPIASSEEIELHPLVASPNNSDLFDVYADIDDIDENILYSTIDNNTPTSTYSLYPGNSTRIANTSIPLATIPDTFLTSGPDIVFPSVPAGTPYLPVSPSIPAISVLIRGTDYYLNPAYYFRKRRKRILAY</sequence>
<name>VL2_HPV07</name>
<organismHost>
    <name type="scientific">Homo sapiens</name>
    <name type="common">Human</name>
    <dbReference type="NCBI Taxonomy" id="9606"/>
</organismHost>
<proteinExistence type="inferred from homology"/>
<accession>P36745</accession>
<feature type="chain" id="PRO_0000133574" description="Minor capsid protein L2">
    <location>
        <begin position="1"/>
        <end position="456"/>
    </location>
</feature>
<feature type="short sequence motif" description="Nuclear localization signal" evidence="1">
    <location>
        <begin position="1"/>
        <end position="12"/>
    </location>
</feature>
<feature type="short sequence motif" description="Nuclear localization signal" evidence="1">
    <location>
        <begin position="446"/>
        <end position="454"/>
    </location>
</feature>
<feature type="disulfide bond" evidence="1">
    <location>
        <begin position="21"/>
        <end position="27"/>
    </location>
</feature>
<gene>
    <name evidence="1" type="primary">L2</name>
</gene>
<organism>
    <name type="scientific">Human papillomavirus 7</name>
    <dbReference type="NCBI Taxonomy" id="10620"/>
    <lineage>
        <taxon>Viruses</taxon>
        <taxon>Monodnaviria</taxon>
        <taxon>Shotokuvirae</taxon>
        <taxon>Cossaviricota</taxon>
        <taxon>Papovaviricetes</taxon>
        <taxon>Zurhausenvirales</taxon>
        <taxon>Papillomaviridae</taxon>
        <taxon>Firstpapillomavirinae</taxon>
        <taxon>Alphapapillomavirus</taxon>
        <taxon>Alphapapillomavirus 8</taxon>
    </lineage>
</organism>
<keyword id="KW-0167">Capsid protein</keyword>
<keyword id="KW-1176">Cytoplasmic inwards viral transport</keyword>
<keyword id="KW-1015">Disulfide bond</keyword>
<keyword id="KW-0238">DNA-binding</keyword>
<keyword id="KW-1039">Host endosome</keyword>
<keyword id="KW-1040">Host Golgi apparatus</keyword>
<keyword id="KW-1048">Host nucleus</keyword>
<keyword id="KW-0945">Host-virus interaction</keyword>
<keyword id="KW-0426">Late protein</keyword>
<keyword id="KW-1177">Microtubular inwards viral transport</keyword>
<keyword id="KW-0597">Phosphoprotein</keyword>
<keyword id="KW-1185">Reference proteome</keyword>
<keyword id="KW-1163">Viral penetration into host nucleus</keyword>
<keyword id="KW-0946">Virion</keyword>
<keyword id="KW-1160">Virus entry into host cell</keyword>
<dbReference type="EMBL" id="X74463">
    <property type="protein sequence ID" value="CAA52480.1"/>
    <property type="molecule type" value="Genomic_DNA"/>
</dbReference>
<dbReference type="PIR" id="S36588">
    <property type="entry name" value="S36588"/>
</dbReference>
<dbReference type="RefSeq" id="NP_041858.1">
    <property type="nucleotide sequence ID" value="NC_001595.1"/>
</dbReference>
<dbReference type="GeneID" id="1489475"/>
<dbReference type="KEGG" id="vg:1489475"/>
<dbReference type="OrthoDB" id="8047at10239"/>
<dbReference type="Proteomes" id="UP000008226">
    <property type="component" value="Genome"/>
</dbReference>
<dbReference type="GO" id="GO:0043657">
    <property type="term" value="C:host cell"/>
    <property type="evidence" value="ECO:0007669"/>
    <property type="project" value="GOC"/>
</dbReference>
<dbReference type="GO" id="GO:0044174">
    <property type="term" value="C:host cell endosome"/>
    <property type="evidence" value="ECO:0007669"/>
    <property type="project" value="UniProtKB-KW"/>
</dbReference>
<dbReference type="GO" id="GO:0044177">
    <property type="term" value="C:host cell Golgi apparatus"/>
    <property type="evidence" value="ECO:0007669"/>
    <property type="project" value="UniProtKB-SubCell"/>
</dbReference>
<dbReference type="GO" id="GO:0042025">
    <property type="term" value="C:host cell nucleus"/>
    <property type="evidence" value="ECO:0007669"/>
    <property type="project" value="UniProtKB-SubCell"/>
</dbReference>
<dbReference type="GO" id="GO:0019028">
    <property type="term" value="C:viral capsid"/>
    <property type="evidence" value="ECO:0007669"/>
    <property type="project" value="UniProtKB-UniRule"/>
</dbReference>
<dbReference type="GO" id="GO:0003677">
    <property type="term" value="F:DNA binding"/>
    <property type="evidence" value="ECO:0007669"/>
    <property type="project" value="UniProtKB-UniRule"/>
</dbReference>
<dbReference type="GO" id="GO:0005198">
    <property type="term" value="F:structural molecule activity"/>
    <property type="evidence" value="ECO:0007669"/>
    <property type="project" value="UniProtKB-UniRule"/>
</dbReference>
<dbReference type="GO" id="GO:0075521">
    <property type="term" value="P:microtubule-dependent intracellular transport of viral material towards nucleus"/>
    <property type="evidence" value="ECO:0007669"/>
    <property type="project" value="UniProtKB-UniRule"/>
</dbReference>
<dbReference type="GO" id="GO:0046718">
    <property type="term" value="P:symbiont entry into host cell"/>
    <property type="evidence" value="ECO:0007669"/>
    <property type="project" value="UniProtKB-KW"/>
</dbReference>
<dbReference type="GO" id="GO:0075732">
    <property type="term" value="P:viral penetration into host nucleus"/>
    <property type="evidence" value="ECO:0007669"/>
    <property type="project" value="UniProtKB-KW"/>
</dbReference>
<dbReference type="HAMAP" id="MF_04003">
    <property type="entry name" value="PPV_L2"/>
    <property type="match status" value="1"/>
</dbReference>
<dbReference type="InterPro" id="IPR000784">
    <property type="entry name" value="Late_L2"/>
</dbReference>
<dbReference type="Pfam" id="PF00513">
    <property type="entry name" value="Late_protein_L2"/>
    <property type="match status" value="1"/>
</dbReference>